<protein>
    <recommendedName>
        <fullName evidence="1">Valine--tRNA ligase</fullName>
        <ecNumber evidence="1">6.1.1.9</ecNumber>
    </recommendedName>
    <alternativeName>
        <fullName evidence="1">Valyl-tRNA synthetase</fullName>
        <shortName evidence="1">ValRS</shortName>
    </alternativeName>
</protein>
<gene>
    <name evidence="1" type="primary">valS</name>
    <name type="ordered locus">AZOSEA40740</name>
    <name type="ORF">ebA7186</name>
</gene>
<sequence length="948" mass="107134">MELAKSFEPAAIEARWYPEWESRGHFDAGLDKSNPNAFCILLPPPNVTGTLHMGHGFNQTIMDALTRYHRMRGFNTLWQPGTDHAGIATQIVVERQLDAKGVSRHDLGREKFVEKVWEWKEYSGGTITRQMRRLGTSPDWKRERFTMDEGLSKTVTETFVRLYNEGLIYRGKRLVNWDPKLGTAVSDLEVVSEEEDGFLWHITYPFSDGPVGDLKGLTVATTRPETMLGDVAVMVHPEDERYAHLIGKTVRLPLCERDIPIIGDDYVDREFGTGCVKVTPAHDFNDYAVGLRHNLPMISILRLDAHVSDDAPEKYRGMDRFVAREVIVQDLEAQGLLAGIKPHKLMVPRGDRTSAVIEPMLTDQWFVAMTKPGADGRSITAKALECVASGEIRFYPENWINTYNQWLNNIQDWCISRQLWWGHQIPAWYADVEGDSRVWVAHDEAEAKSLAAKDGFTGRLRRDDDVLDTWYSSALWPFSTLDWTAEWPEKSNDALDLYLPSSVLVTGFDIIFFWVARMVMMTKHITGKIPFRDVYVHGLIRDAEGQKMSKSKGNVLDPIDLIDGISADELAKKRTFGLMNPKQAQSIEKKTRKEFPEGIPAFGTDALRFTFASLATPGRDIKFDLSRCEGYRNFCNKLWNATRFVLMNCEGQDCGISAAAGSAACNTANLDFSFADRWIVSKLQRTEAEVAQHFRDYRFDLVSKAVYEFVWDEYCDWYVELAKVQIQSGTEAQQRATRRTLLRVLETVLRLAHPLIPFITEELWQTVAPLAGRKDTDSIMLARYPEADLSRLDEASEAKIAELKAIVGTCRNLRSEMNISPAQRMPLVAAGEATILTSYAPYLAGLARLSEVAVVDEIGTDELAPVAVAGRFKLMLRVEIDIAAERERIAKEIARLEGEMTKAESKLANESFVARAPATVVQQERERLASFVATLEKLRPQLEKLGAR</sequence>
<organism>
    <name type="scientific">Aromatoleum aromaticum (strain DSM 19018 / LMG 30748 / EbN1)</name>
    <name type="common">Azoarcus sp. (strain EbN1)</name>
    <dbReference type="NCBI Taxonomy" id="76114"/>
    <lineage>
        <taxon>Bacteria</taxon>
        <taxon>Pseudomonadati</taxon>
        <taxon>Pseudomonadota</taxon>
        <taxon>Betaproteobacteria</taxon>
        <taxon>Rhodocyclales</taxon>
        <taxon>Rhodocyclaceae</taxon>
        <taxon>Aromatoleum</taxon>
    </lineage>
</organism>
<comment type="function">
    <text evidence="1">Catalyzes the attachment of valine to tRNA(Val). As ValRS can inadvertently accommodate and process structurally similar amino acids such as threonine, to avoid such errors, it has a 'posttransfer' editing activity that hydrolyzes mischarged Thr-tRNA(Val) in a tRNA-dependent manner.</text>
</comment>
<comment type="catalytic activity">
    <reaction evidence="1">
        <text>tRNA(Val) + L-valine + ATP = L-valyl-tRNA(Val) + AMP + diphosphate</text>
        <dbReference type="Rhea" id="RHEA:10704"/>
        <dbReference type="Rhea" id="RHEA-COMP:9672"/>
        <dbReference type="Rhea" id="RHEA-COMP:9708"/>
        <dbReference type="ChEBI" id="CHEBI:30616"/>
        <dbReference type="ChEBI" id="CHEBI:33019"/>
        <dbReference type="ChEBI" id="CHEBI:57762"/>
        <dbReference type="ChEBI" id="CHEBI:78442"/>
        <dbReference type="ChEBI" id="CHEBI:78537"/>
        <dbReference type="ChEBI" id="CHEBI:456215"/>
        <dbReference type="EC" id="6.1.1.9"/>
    </reaction>
</comment>
<comment type="subunit">
    <text evidence="1">Monomer.</text>
</comment>
<comment type="subcellular location">
    <subcellularLocation>
        <location evidence="1">Cytoplasm</location>
    </subcellularLocation>
</comment>
<comment type="domain">
    <text evidence="1">ValRS has two distinct active sites: one for aminoacylation and one for editing. The misactivated threonine is translocated from the active site to the editing site.</text>
</comment>
<comment type="domain">
    <text evidence="1">The C-terminal coiled-coil domain is crucial for aminoacylation activity.</text>
</comment>
<comment type="similarity">
    <text evidence="1">Belongs to the class-I aminoacyl-tRNA synthetase family. ValS type 1 subfamily.</text>
</comment>
<keyword id="KW-0030">Aminoacyl-tRNA synthetase</keyword>
<keyword id="KW-0067">ATP-binding</keyword>
<keyword id="KW-0175">Coiled coil</keyword>
<keyword id="KW-0963">Cytoplasm</keyword>
<keyword id="KW-0436">Ligase</keyword>
<keyword id="KW-0547">Nucleotide-binding</keyword>
<keyword id="KW-0648">Protein biosynthesis</keyword>
<keyword id="KW-1185">Reference proteome</keyword>
<name>SYV_AROAE</name>
<proteinExistence type="inferred from homology"/>
<feature type="chain" id="PRO_0000224429" description="Valine--tRNA ligase">
    <location>
        <begin position="1"/>
        <end position="948"/>
    </location>
</feature>
<feature type="coiled-coil region" evidence="1">
    <location>
        <begin position="877"/>
        <end position="912"/>
    </location>
</feature>
<feature type="short sequence motif" description="'HIGH' region">
    <location>
        <begin position="45"/>
        <end position="55"/>
    </location>
</feature>
<feature type="short sequence motif" description="'KMSKS' region">
    <location>
        <begin position="547"/>
        <end position="551"/>
    </location>
</feature>
<feature type="binding site" evidence="1">
    <location>
        <position position="550"/>
    </location>
    <ligand>
        <name>ATP</name>
        <dbReference type="ChEBI" id="CHEBI:30616"/>
    </ligand>
</feature>
<dbReference type="EC" id="6.1.1.9" evidence="1"/>
<dbReference type="EMBL" id="CR555306">
    <property type="protein sequence ID" value="CAI10199.1"/>
    <property type="molecule type" value="Genomic_DNA"/>
</dbReference>
<dbReference type="RefSeq" id="WP_011239844.1">
    <property type="nucleotide sequence ID" value="NC_006513.1"/>
</dbReference>
<dbReference type="SMR" id="Q5NXL5"/>
<dbReference type="STRING" id="76114.ebA7186"/>
<dbReference type="KEGG" id="eba:ebA7186"/>
<dbReference type="eggNOG" id="COG0525">
    <property type="taxonomic scope" value="Bacteria"/>
</dbReference>
<dbReference type="HOGENOM" id="CLU_001493_0_2_4"/>
<dbReference type="OrthoDB" id="9810365at2"/>
<dbReference type="Proteomes" id="UP000006552">
    <property type="component" value="Chromosome"/>
</dbReference>
<dbReference type="GO" id="GO:0005829">
    <property type="term" value="C:cytosol"/>
    <property type="evidence" value="ECO:0007669"/>
    <property type="project" value="TreeGrafter"/>
</dbReference>
<dbReference type="GO" id="GO:0002161">
    <property type="term" value="F:aminoacyl-tRNA deacylase activity"/>
    <property type="evidence" value="ECO:0007669"/>
    <property type="project" value="InterPro"/>
</dbReference>
<dbReference type="GO" id="GO:0005524">
    <property type="term" value="F:ATP binding"/>
    <property type="evidence" value="ECO:0007669"/>
    <property type="project" value="UniProtKB-UniRule"/>
</dbReference>
<dbReference type="GO" id="GO:0004832">
    <property type="term" value="F:valine-tRNA ligase activity"/>
    <property type="evidence" value="ECO:0007669"/>
    <property type="project" value="UniProtKB-UniRule"/>
</dbReference>
<dbReference type="GO" id="GO:0006438">
    <property type="term" value="P:valyl-tRNA aminoacylation"/>
    <property type="evidence" value="ECO:0007669"/>
    <property type="project" value="UniProtKB-UniRule"/>
</dbReference>
<dbReference type="CDD" id="cd07962">
    <property type="entry name" value="Anticodon_Ia_Val"/>
    <property type="match status" value="1"/>
</dbReference>
<dbReference type="CDD" id="cd00817">
    <property type="entry name" value="ValRS_core"/>
    <property type="match status" value="1"/>
</dbReference>
<dbReference type="FunFam" id="1.10.287.380:FF:000001">
    <property type="entry name" value="Valine--tRNA ligase"/>
    <property type="match status" value="1"/>
</dbReference>
<dbReference type="FunFam" id="1.10.730.10:FF:000009">
    <property type="entry name" value="Valine--tRNA ligase, mitochondrial"/>
    <property type="match status" value="1"/>
</dbReference>
<dbReference type="FunFam" id="3.40.50.620:FF:000020">
    <property type="entry name" value="Valine--tRNA ligase, mitochondrial"/>
    <property type="match status" value="1"/>
</dbReference>
<dbReference type="Gene3D" id="3.40.50.620">
    <property type="entry name" value="HUPs"/>
    <property type="match status" value="2"/>
</dbReference>
<dbReference type="Gene3D" id="1.10.730.10">
    <property type="entry name" value="Isoleucyl-tRNA Synthetase, Domain 1"/>
    <property type="match status" value="1"/>
</dbReference>
<dbReference type="Gene3D" id="1.10.287.380">
    <property type="entry name" value="Valyl-tRNA synthetase, C-terminal domain"/>
    <property type="match status" value="1"/>
</dbReference>
<dbReference type="Gene3D" id="3.90.740.10">
    <property type="entry name" value="Valyl/Leucyl/Isoleucyl-tRNA synthetase, editing domain"/>
    <property type="match status" value="1"/>
</dbReference>
<dbReference type="HAMAP" id="MF_02004">
    <property type="entry name" value="Val_tRNA_synth_type1"/>
    <property type="match status" value="1"/>
</dbReference>
<dbReference type="InterPro" id="IPR001412">
    <property type="entry name" value="aa-tRNA-synth_I_CS"/>
</dbReference>
<dbReference type="InterPro" id="IPR002300">
    <property type="entry name" value="aa-tRNA-synth_Ia"/>
</dbReference>
<dbReference type="InterPro" id="IPR033705">
    <property type="entry name" value="Anticodon_Ia_Val"/>
</dbReference>
<dbReference type="InterPro" id="IPR013155">
    <property type="entry name" value="M/V/L/I-tRNA-synth_anticd-bd"/>
</dbReference>
<dbReference type="InterPro" id="IPR014729">
    <property type="entry name" value="Rossmann-like_a/b/a_fold"/>
</dbReference>
<dbReference type="InterPro" id="IPR010978">
    <property type="entry name" value="tRNA-bd_arm"/>
</dbReference>
<dbReference type="InterPro" id="IPR009080">
    <property type="entry name" value="tRNAsynth_Ia_anticodon-bd"/>
</dbReference>
<dbReference type="InterPro" id="IPR037118">
    <property type="entry name" value="Val-tRNA_synth_C_sf"/>
</dbReference>
<dbReference type="InterPro" id="IPR019499">
    <property type="entry name" value="Val-tRNA_synth_tRNA-bd"/>
</dbReference>
<dbReference type="InterPro" id="IPR009008">
    <property type="entry name" value="Val/Leu/Ile-tRNA-synth_edit"/>
</dbReference>
<dbReference type="InterPro" id="IPR002303">
    <property type="entry name" value="Valyl-tRNA_ligase"/>
</dbReference>
<dbReference type="NCBIfam" id="NF004349">
    <property type="entry name" value="PRK05729.1"/>
    <property type="match status" value="1"/>
</dbReference>
<dbReference type="NCBIfam" id="TIGR00422">
    <property type="entry name" value="valS"/>
    <property type="match status" value="1"/>
</dbReference>
<dbReference type="PANTHER" id="PTHR11946:SF93">
    <property type="entry name" value="VALINE--TRNA LIGASE, CHLOROPLASTIC_MITOCHONDRIAL 2"/>
    <property type="match status" value="1"/>
</dbReference>
<dbReference type="PANTHER" id="PTHR11946">
    <property type="entry name" value="VALYL-TRNA SYNTHETASES"/>
    <property type="match status" value="1"/>
</dbReference>
<dbReference type="Pfam" id="PF08264">
    <property type="entry name" value="Anticodon_1"/>
    <property type="match status" value="1"/>
</dbReference>
<dbReference type="Pfam" id="PF00133">
    <property type="entry name" value="tRNA-synt_1"/>
    <property type="match status" value="1"/>
</dbReference>
<dbReference type="Pfam" id="PF10458">
    <property type="entry name" value="Val_tRNA-synt_C"/>
    <property type="match status" value="1"/>
</dbReference>
<dbReference type="PRINTS" id="PR00986">
    <property type="entry name" value="TRNASYNTHVAL"/>
</dbReference>
<dbReference type="SUPFAM" id="SSF47323">
    <property type="entry name" value="Anticodon-binding domain of a subclass of class I aminoacyl-tRNA synthetases"/>
    <property type="match status" value="1"/>
</dbReference>
<dbReference type="SUPFAM" id="SSF52374">
    <property type="entry name" value="Nucleotidylyl transferase"/>
    <property type="match status" value="1"/>
</dbReference>
<dbReference type="SUPFAM" id="SSF46589">
    <property type="entry name" value="tRNA-binding arm"/>
    <property type="match status" value="1"/>
</dbReference>
<dbReference type="SUPFAM" id="SSF50677">
    <property type="entry name" value="ValRS/IleRS/LeuRS editing domain"/>
    <property type="match status" value="1"/>
</dbReference>
<dbReference type="PROSITE" id="PS00178">
    <property type="entry name" value="AA_TRNA_LIGASE_I"/>
    <property type="match status" value="1"/>
</dbReference>
<accession>Q5NXL5</accession>
<evidence type="ECO:0000255" key="1">
    <source>
        <dbReference type="HAMAP-Rule" id="MF_02004"/>
    </source>
</evidence>
<reference key="1">
    <citation type="journal article" date="2005" name="Arch. Microbiol.">
        <title>The genome sequence of an anaerobic aromatic-degrading denitrifying bacterium, strain EbN1.</title>
        <authorList>
            <person name="Rabus R."/>
            <person name="Kube M."/>
            <person name="Heider J."/>
            <person name="Beck A."/>
            <person name="Heitmann K."/>
            <person name="Widdel F."/>
            <person name="Reinhardt R."/>
        </authorList>
    </citation>
    <scope>NUCLEOTIDE SEQUENCE [LARGE SCALE GENOMIC DNA]</scope>
    <source>
        <strain>DSM 19018 / LMG 30748 / EbN1</strain>
    </source>
</reference>